<sequence length="337" mass="38312">MDLDVVNMFVIAGGTLAIPILAFVASFLLWPSALIRIYYWYWRRTLGMQVRYVHHEDYQFCYSFRGRPGHKPSVLMLHGFSAHKDMWLSVVKFLPKNLHLVCVDMPGHEGTTRSSLDDLSIVGQVKRIHQFVECLKLNKKPFHLIGTSMGGNVAGVYAAYYPSDVCSLSLVCPAGLQYSTDNRFVQRLKELEDSAATQKIPLIPSTPEEMSEMLQLCSYVRFKVPQQILQGLVDVRIPHNSFYRKLFLEIVSEKSRYSLHENMDKIKVPTQIIWGKQDQVLDVSGADILAKSITNSQVEVLENCGHSVVMERPRKTAKLVVDFLASVHNPDNNKKLN</sequence>
<keyword id="KW-0903">Direct protein sequencing</keyword>
<keyword id="KW-0967">Endosome</keyword>
<keyword id="KW-0378">Hydrolase</keyword>
<keyword id="KW-0443">Lipid metabolism</keyword>
<keyword id="KW-0458">Lysosome</keyword>
<keyword id="KW-0472">Membrane</keyword>
<keyword id="KW-0496">Mitochondrion</keyword>
<keyword id="KW-1185">Reference proteome</keyword>
<keyword id="KW-0735">Signal-anchor</keyword>
<keyword id="KW-0812">Transmembrane</keyword>
<keyword id="KW-1133">Transmembrane helix</keyword>
<accession>Q5XI64</accession>
<gene>
    <name evidence="6" type="primary">Abhd6</name>
</gene>
<reference key="1">
    <citation type="journal article" date="2004" name="Genome Res.">
        <title>The status, quality, and expansion of the NIH full-length cDNA project: the Mammalian Gene Collection (MGC).</title>
        <authorList>
            <consortium name="The MGC Project Team"/>
        </authorList>
    </citation>
    <scope>NUCLEOTIDE SEQUENCE [LARGE SCALE MRNA]</scope>
    <source>
        <tissue>Testis</tissue>
    </source>
</reference>
<reference key="2">
    <citation type="submission" date="2007-09" db="UniProtKB">
        <authorList>
            <person name="Lubec G."/>
            <person name="Kang S.U."/>
            <person name="Lubec S."/>
        </authorList>
    </citation>
    <scope>PROTEIN SEQUENCE OF 245-254</scope>
    <scope>IDENTIFICATION BY MASS SPECTROMETRY</scope>
    <source>
        <strain>Sprague-Dawley</strain>
        <tissue>Brain</tissue>
    </source>
</reference>
<dbReference type="EC" id="3.1.1.23" evidence="3"/>
<dbReference type="EMBL" id="BC083826">
    <property type="protein sequence ID" value="AAH83826.1"/>
    <property type="molecule type" value="mRNA"/>
</dbReference>
<dbReference type="RefSeq" id="NP_001007681.1">
    <property type="nucleotide sequence ID" value="NM_001007680.1"/>
</dbReference>
<dbReference type="RefSeq" id="XP_006251828.1">
    <property type="nucleotide sequence ID" value="XM_006251766.3"/>
</dbReference>
<dbReference type="RefSeq" id="XP_006251829.1">
    <property type="nucleotide sequence ID" value="XM_006251767.5"/>
</dbReference>
<dbReference type="RefSeq" id="XP_006251830.1">
    <property type="nucleotide sequence ID" value="XM_006251768.3"/>
</dbReference>
<dbReference type="SMR" id="Q5XI64"/>
<dbReference type="CORUM" id="Q5XI64"/>
<dbReference type="FunCoup" id="Q5XI64">
    <property type="interactions" value="119"/>
</dbReference>
<dbReference type="STRING" id="10116.ENSRNOP00000074573"/>
<dbReference type="ChEMBL" id="CHEMBL3708569"/>
<dbReference type="GuidetoPHARMACOLOGY" id="2919"/>
<dbReference type="ESTHER" id="rat-abhd6">
    <property type="family name" value="ABHD6-Lip"/>
</dbReference>
<dbReference type="PhosphoSitePlus" id="Q5XI64"/>
<dbReference type="jPOST" id="Q5XI64"/>
<dbReference type="PaxDb" id="10116-ENSRNOP00000012271"/>
<dbReference type="Ensembl" id="ENSRNOT00000012271.5">
    <property type="protein sequence ID" value="ENSRNOP00000012271.3"/>
    <property type="gene ID" value="ENSRNOG00000008167.6"/>
</dbReference>
<dbReference type="GeneID" id="305795"/>
<dbReference type="KEGG" id="rno:305795"/>
<dbReference type="AGR" id="RGD:1359323"/>
<dbReference type="CTD" id="57406"/>
<dbReference type="RGD" id="1359323">
    <property type="gene designation" value="Abhd6"/>
</dbReference>
<dbReference type="eggNOG" id="KOG1454">
    <property type="taxonomic scope" value="Eukaryota"/>
</dbReference>
<dbReference type="GeneTree" id="ENSGT00510000047225"/>
<dbReference type="InParanoid" id="Q5XI64"/>
<dbReference type="OMA" id="NAMWQYS"/>
<dbReference type="PhylomeDB" id="Q5XI64"/>
<dbReference type="TreeFam" id="TF331946"/>
<dbReference type="Reactome" id="R-RNO-426048">
    <property type="pathway name" value="Arachidonate production from DAG"/>
</dbReference>
<dbReference type="PRO" id="PR:Q5XI64"/>
<dbReference type="Proteomes" id="UP000002494">
    <property type="component" value="Chromosome 15"/>
</dbReference>
<dbReference type="Bgee" id="ENSRNOG00000008167">
    <property type="expression patterns" value="Expressed in jejunum and 20 other cell types or tissues"/>
</dbReference>
<dbReference type="GO" id="GO:0032281">
    <property type="term" value="C:AMPA glutamate receptor complex"/>
    <property type="evidence" value="ECO:0000266"/>
    <property type="project" value="RGD"/>
</dbReference>
<dbReference type="GO" id="GO:0098982">
    <property type="term" value="C:GABA-ergic synapse"/>
    <property type="evidence" value="ECO:0000266"/>
    <property type="project" value="RGD"/>
</dbReference>
<dbReference type="GO" id="GO:0098978">
    <property type="term" value="C:glutamatergic synapse"/>
    <property type="evidence" value="ECO:0000266"/>
    <property type="project" value="RGD"/>
</dbReference>
<dbReference type="GO" id="GO:0031902">
    <property type="term" value="C:late endosome membrane"/>
    <property type="evidence" value="ECO:0000250"/>
    <property type="project" value="UniProtKB"/>
</dbReference>
<dbReference type="GO" id="GO:0005765">
    <property type="term" value="C:lysosomal membrane"/>
    <property type="evidence" value="ECO:0000250"/>
    <property type="project" value="UniProtKB"/>
</dbReference>
<dbReference type="GO" id="GO:0016020">
    <property type="term" value="C:membrane"/>
    <property type="evidence" value="ECO:0000250"/>
    <property type="project" value="UniProtKB"/>
</dbReference>
<dbReference type="GO" id="GO:0031966">
    <property type="term" value="C:mitochondrial membrane"/>
    <property type="evidence" value="ECO:0007669"/>
    <property type="project" value="UniProtKB-SubCell"/>
</dbReference>
<dbReference type="GO" id="GO:0005739">
    <property type="term" value="C:mitochondrion"/>
    <property type="evidence" value="ECO:0000266"/>
    <property type="project" value="RGD"/>
</dbReference>
<dbReference type="GO" id="GO:0045211">
    <property type="term" value="C:postsynaptic membrane"/>
    <property type="evidence" value="ECO:0000266"/>
    <property type="project" value="RGD"/>
</dbReference>
<dbReference type="GO" id="GO:0047372">
    <property type="term" value="F:monoacylglycerol lipase activity"/>
    <property type="evidence" value="ECO:0000250"/>
    <property type="project" value="UniProtKB"/>
</dbReference>
<dbReference type="GO" id="GO:0004620">
    <property type="term" value="F:phospholipase activity"/>
    <property type="evidence" value="ECO:0000266"/>
    <property type="project" value="RGD"/>
</dbReference>
<dbReference type="GO" id="GO:0046464">
    <property type="term" value="P:acylglycerol catabolic process"/>
    <property type="evidence" value="ECO:0000250"/>
    <property type="project" value="UniProtKB"/>
</dbReference>
<dbReference type="GO" id="GO:0060292">
    <property type="term" value="P:long-term synaptic depression"/>
    <property type="evidence" value="ECO:0000266"/>
    <property type="project" value="RGD"/>
</dbReference>
<dbReference type="GO" id="GO:2001311">
    <property type="term" value="P:lysobisphosphatidic acid metabolic process"/>
    <property type="evidence" value="ECO:0000250"/>
    <property type="project" value="UniProtKB"/>
</dbReference>
<dbReference type="GO" id="GO:0052651">
    <property type="term" value="P:monoacylglycerol catabolic process"/>
    <property type="evidence" value="ECO:0000250"/>
    <property type="project" value="UniProtKB"/>
</dbReference>
<dbReference type="GO" id="GO:0030336">
    <property type="term" value="P:negative regulation of cell migration"/>
    <property type="evidence" value="ECO:0000266"/>
    <property type="project" value="RGD"/>
</dbReference>
<dbReference type="GO" id="GO:0120163">
    <property type="term" value="P:negative regulation of cold-induced thermogenesis"/>
    <property type="evidence" value="ECO:0000250"/>
    <property type="project" value="YuBioLab"/>
</dbReference>
<dbReference type="GO" id="GO:0009395">
    <property type="term" value="P:phospholipid catabolic process"/>
    <property type="evidence" value="ECO:0000266"/>
    <property type="project" value="RGD"/>
</dbReference>
<dbReference type="GO" id="GO:0046889">
    <property type="term" value="P:positive regulation of lipid biosynthetic process"/>
    <property type="evidence" value="ECO:0000266"/>
    <property type="project" value="RGD"/>
</dbReference>
<dbReference type="GO" id="GO:2000124">
    <property type="term" value="P:regulation of endocannabinoid signaling pathway"/>
    <property type="evidence" value="ECO:0000266"/>
    <property type="project" value="RGD"/>
</dbReference>
<dbReference type="GO" id="GO:0099178">
    <property type="term" value="P:regulation of retrograde trans-synaptic signaling by endocanabinoid"/>
    <property type="evidence" value="ECO:0000266"/>
    <property type="project" value="RGD"/>
</dbReference>
<dbReference type="FunFam" id="3.40.50.1820:FF:000082">
    <property type="entry name" value="monoacylglycerol lipase ABHD6"/>
    <property type="match status" value="1"/>
</dbReference>
<dbReference type="Gene3D" id="3.40.50.1820">
    <property type="entry name" value="alpha/beta hydrolase"/>
    <property type="match status" value="1"/>
</dbReference>
<dbReference type="InterPro" id="IPR000073">
    <property type="entry name" value="AB_hydrolase_1"/>
</dbReference>
<dbReference type="InterPro" id="IPR029058">
    <property type="entry name" value="AB_hydrolase_fold"/>
</dbReference>
<dbReference type="InterPro" id="IPR050266">
    <property type="entry name" value="AB_hydrolase_sf"/>
</dbReference>
<dbReference type="InterPro" id="IPR000639">
    <property type="entry name" value="Epox_hydrolase-like"/>
</dbReference>
<dbReference type="PANTHER" id="PTHR43798">
    <property type="entry name" value="MONOACYLGLYCEROL LIPASE"/>
    <property type="match status" value="1"/>
</dbReference>
<dbReference type="PANTHER" id="PTHR43798:SF5">
    <property type="entry name" value="MONOACYLGLYCEROL LIPASE ABHD6"/>
    <property type="match status" value="1"/>
</dbReference>
<dbReference type="Pfam" id="PF00561">
    <property type="entry name" value="Abhydrolase_1"/>
    <property type="match status" value="1"/>
</dbReference>
<dbReference type="PRINTS" id="PR00111">
    <property type="entry name" value="ABHYDROLASE"/>
</dbReference>
<dbReference type="PRINTS" id="PR00412">
    <property type="entry name" value="EPOXHYDRLASE"/>
</dbReference>
<dbReference type="SUPFAM" id="SSF53474">
    <property type="entry name" value="alpha/beta-Hydrolases"/>
    <property type="match status" value="1"/>
</dbReference>
<organism>
    <name type="scientific">Rattus norvegicus</name>
    <name type="common">Rat</name>
    <dbReference type="NCBI Taxonomy" id="10116"/>
    <lineage>
        <taxon>Eukaryota</taxon>
        <taxon>Metazoa</taxon>
        <taxon>Chordata</taxon>
        <taxon>Craniata</taxon>
        <taxon>Vertebrata</taxon>
        <taxon>Euteleostomi</taxon>
        <taxon>Mammalia</taxon>
        <taxon>Eutheria</taxon>
        <taxon>Euarchontoglires</taxon>
        <taxon>Glires</taxon>
        <taxon>Rodentia</taxon>
        <taxon>Myomorpha</taxon>
        <taxon>Muroidea</taxon>
        <taxon>Muridae</taxon>
        <taxon>Murinae</taxon>
        <taxon>Rattus</taxon>
    </lineage>
</organism>
<proteinExistence type="evidence at protein level"/>
<protein>
    <recommendedName>
        <fullName evidence="5">Monoacylglycerol lipase ABHD6</fullName>
        <ecNumber evidence="3">3.1.1.23</ecNumber>
    </recommendedName>
    <alternativeName>
        <fullName evidence="1">2-arachidonoylglycerol hydrolase</fullName>
    </alternativeName>
    <alternativeName>
        <fullName evidence="6">Abhydrolase domain-containing protein 6</fullName>
    </alternativeName>
</protein>
<comment type="function">
    <text evidence="1 3">Lipase that preferentially hydrolysis medium-chain saturated monoacylglycerols including 2-arachidonoylglycerol (By similarity). Through 2-arachidonoylglycerol degradation may regulate endocannabinoid signaling pathways. Also has a lysophosphatidyl lipase activity with a preference for lysophosphatidylglycerol among other lysophospholipids (By similarity). Also able to degrade bis(monoacylglycero)phosphate (BMP) and constitutes the major enzyme for BMP catabolism. BMP, also known as lysobisphosphatidic acid, is enriched in late endosomes and lysosomes and plays a key role in the formation of intraluminal vesicles and in lipid sorting (By similarity).</text>
</comment>
<comment type="catalytic activity">
    <reaction evidence="3">
        <text>Hydrolyzes glycerol monoesters of long-chain fatty acids.</text>
        <dbReference type="EC" id="3.1.1.23"/>
    </reaction>
</comment>
<comment type="catalytic activity">
    <reaction evidence="3">
        <text>1-octanoylglycerol + H2O = octanoate + glycerol + H(+)</text>
        <dbReference type="Rhea" id="RHEA:44328"/>
        <dbReference type="ChEBI" id="CHEBI:15377"/>
        <dbReference type="ChEBI" id="CHEBI:15378"/>
        <dbReference type="ChEBI" id="CHEBI:17754"/>
        <dbReference type="ChEBI" id="CHEBI:25646"/>
        <dbReference type="ChEBI" id="CHEBI:85241"/>
    </reaction>
</comment>
<comment type="catalytic activity">
    <reaction evidence="3">
        <text>1-decanoylglycerol + H2O = decanoate + glycerol + H(+)</text>
        <dbReference type="Rhea" id="RHEA:44320"/>
        <dbReference type="ChEBI" id="CHEBI:15377"/>
        <dbReference type="ChEBI" id="CHEBI:15378"/>
        <dbReference type="ChEBI" id="CHEBI:17754"/>
        <dbReference type="ChEBI" id="CHEBI:27689"/>
        <dbReference type="ChEBI" id="CHEBI:75547"/>
    </reaction>
</comment>
<comment type="catalytic activity">
    <reaction evidence="3">
        <text>1-dodecanoylglycerol + H2O = dodecanoate + glycerol + H(+)</text>
        <dbReference type="Rhea" id="RHEA:44316"/>
        <dbReference type="ChEBI" id="CHEBI:15377"/>
        <dbReference type="ChEBI" id="CHEBI:15378"/>
        <dbReference type="ChEBI" id="CHEBI:17754"/>
        <dbReference type="ChEBI" id="CHEBI:18262"/>
        <dbReference type="ChEBI" id="CHEBI:75539"/>
    </reaction>
</comment>
<comment type="catalytic activity">
    <reaction evidence="3">
        <text>1-tetradecanoylglycerol + H2O = tetradecanoate + glycerol + H(+)</text>
        <dbReference type="Rhea" id="RHEA:44312"/>
        <dbReference type="ChEBI" id="CHEBI:15377"/>
        <dbReference type="ChEBI" id="CHEBI:15378"/>
        <dbReference type="ChEBI" id="CHEBI:17754"/>
        <dbReference type="ChEBI" id="CHEBI:30807"/>
        <dbReference type="ChEBI" id="CHEBI:75562"/>
    </reaction>
</comment>
<comment type="catalytic activity">
    <reaction evidence="3">
        <text>2-hexadecanoylglycerol + H2O = glycerol + hexadecanoate + H(+)</text>
        <dbReference type="Rhea" id="RHEA:39963"/>
        <dbReference type="ChEBI" id="CHEBI:7896"/>
        <dbReference type="ChEBI" id="CHEBI:15377"/>
        <dbReference type="ChEBI" id="CHEBI:15378"/>
        <dbReference type="ChEBI" id="CHEBI:17754"/>
        <dbReference type="ChEBI" id="CHEBI:75455"/>
    </reaction>
</comment>
<comment type="catalytic activity">
    <reaction evidence="3">
        <text>2-(9Z-octadecenoyl)-glycerol + H2O = glycerol + (9Z)-octadecenoate + H(+)</text>
        <dbReference type="Rhea" id="RHEA:38491"/>
        <dbReference type="ChEBI" id="CHEBI:15377"/>
        <dbReference type="ChEBI" id="CHEBI:15378"/>
        <dbReference type="ChEBI" id="CHEBI:17754"/>
        <dbReference type="ChEBI" id="CHEBI:30823"/>
        <dbReference type="ChEBI" id="CHEBI:73990"/>
    </reaction>
</comment>
<comment type="catalytic activity">
    <reaction evidence="3">
        <text>1-(9Z-octadecenoyl)-glycerol + H2O = glycerol + (9Z)-octadecenoate + H(+)</text>
        <dbReference type="Rhea" id="RHEA:38487"/>
        <dbReference type="ChEBI" id="CHEBI:15377"/>
        <dbReference type="ChEBI" id="CHEBI:15378"/>
        <dbReference type="ChEBI" id="CHEBI:17754"/>
        <dbReference type="ChEBI" id="CHEBI:30823"/>
        <dbReference type="ChEBI" id="CHEBI:75342"/>
    </reaction>
</comment>
<comment type="catalytic activity">
    <reaction evidence="3">
        <text>2-(9Z,12Z-octadecadienoyl)-glycerol + H2O = (9Z,12Z)-octadecadienoate + glycerol + H(+)</text>
        <dbReference type="Rhea" id="RHEA:44732"/>
        <dbReference type="ChEBI" id="CHEBI:15377"/>
        <dbReference type="ChEBI" id="CHEBI:15378"/>
        <dbReference type="ChEBI" id="CHEBI:17754"/>
        <dbReference type="ChEBI" id="CHEBI:30245"/>
        <dbReference type="ChEBI" id="CHEBI:75457"/>
    </reaction>
</comment>
<comment type="catalytic activity">
    <reaction evidence="3">
        <text>2-(5Z,8Z,11Z,14Z-eicosatetraenoyl)-glycerol + H2O = glycerol + (5Z,8Z,11Z,14Z)-eicosatetraenoate + H(+)</text>
        <dbReference type="Rhea" id="RHEA:26132"/>
        <dbReference type="ChEBI" id="CHEBI:15377"/>
        <dbReference type="ChEBI" id="CHEBI:15378"/>
        <dbReference type="ChEBI" id="CHEBI:17754"/>
        <dbReference type="ChEBI" id="CHEBI:32395"/>
        <dbReference type="ChEBI" id="CHEBI:52392"/>
    </reaction>
</comment>
<comment type="catalytic activity">
    <reaction evidence="3">
        <text>1-(5Z,8Z,11Z,14Z-eicosatetraenoyl)-glycerol + H2O = glycerol + (5Z,8Z,11Z,14Z)-eicosatetraenoate + H(+)</text>
        <dbReference type="Rhea" id="RHEA:44728"/>
        <dbReference type="ChEBI" id="CHEBI:15377"/>
        <dbReference type="ChEBI" id="CHEBI:15378"/>
        <dbReference type="ChEBI" id="CHEBI:17754"/>
        <dbReference type="ChEBI" id="CHEBI:32395"/>
        <dbReference type="ChEBI" id="CHEBI:75612"/>
    </reaction>
</comment>
<comment type="catalytic activity">
    <reaction evidence="3">
        <text>1-(9Z,12Z-octadecadienoyl)-glycerol + H2O = (9Z,12Z)-octadecadienoate + glycerol + H(+)</text>
        <dbReference type="Rhea" id="RHEA:48428"/>
        <dbReference type="ChEBI" id="CHEBI:15377"/>
        <dbReference type="ChEBI" id="CHEBI:15378"/>
        <dbReference type="ChEBI" id="CHEBI:17754"/>
        <dbReference type="ChEBI" id="CHEBI:30245"/>
        <dbReference type="ChEBI" id="CHEBI:75568"/>
    </reaction>
</comment>
<comment type="catalytic activity">
    <reaction evidence="3">
        <text>3-(9Z-octadecenoyl)-sn-glycero-1-phospho-(3'-(9Z-octadecenoyl)-1'-sn-glycerol) + H2O = 3-(9Z-octadecenoyl)-sn-glycero-1-phospho-(1'-sn-glycerol) + (9Z)-octadecenoate + H(+)</text>
        <dbReference type="Rhea" id="RHEA:55712"/>
        <dbReference type="ChEBI" id="CHEBI:15377"/>
        <dbReference type="ChEBI" id="CHEBI:15378"/>
        <dbReference type="ChEBI" id="CHEBI:30823"/>
        <dbReference type="ChEBI" id="CHEBI:139150"/>
        <dbReference type="ChEBI" id="CHEBI:139152"/>
    </reaction>
</comment>
<comment type="catalytic activity">
    <reaction evidence="1">
        <text>(S,S)-2-(9Z-octadecenoyl)-sn-glycero-1-phospho-(2'-(9Z-octadecenoyl)-1'-sn-glycerol) + H2O = (S,S)-2-(9Z-octadecenoyl)-sn-glycero-1-phospho-(1'-sn-glycerol) + (9Z)-octadecenoate + H(+)</text>
        <dbReference type="Rhea" id="RHEA:55716"/>
        <dbReference type="ChEBI" id="CHEBI:15377"/>
        <dbReference type="ChEBI" id="CHEBI:15378"/>
        <dbReference type="ChEBI" id="CHEBI:30823"/>
        <dbReference type="ChEBI" id="CHEBI:139156"/>
        <dbReference type="ChEBI" id="CHEBI:139157"/>
    </reaction>
</comment>
<comment type="catalytic activity">
    <reaction evidence="1">
        <text>(R,R)-2-(9Z-octadecenoyl)-sn-glycero-3-phospho-(2'-(9Z-octadecenoyl)-3'-sn-glycerol) + H2O = (R,R)-2-(9Z-octadecenoyl)-sn-glycero-3-phospho-(3'-sn-glycerol) + (9Z)-octadecenoate + H(+)</text>
        <dbReference type="Rhea" id="RHEA:55804"/>
        <dbReference type="ChEBI" id="CHEBI:15377"/>
        <dbReference type="ChEBI" id="CHEBI:15378"/>
        <dbReference type="ChEBI" id="CHEBI:30823"/>
        <dbReference type="ChEBI" id="CHEBI:139228"/>
        <dbReference type="ChEBI" id="CHEBI:139230"/>
    </reaction>
</comment>
<comment type="subcellular location">
    <subcellularLocation>
        <location evidence="1">Late endosome membrane</location>
        <topology evidence="4">Single-pass type II membrane protein</topology>
    </subcellularLocation>
    <subcellularLocation>
        <location evidence="1">Lysosome membrane</location>
        <topology evidence="4">Single-pass type II membrane protein</topology>
    </subcellularLocation>
    <subcellularLocation>
        <location evidence="1">Mitochondrion membrane</location>
        <topology evidence="4">Single-pass type II membrane protein</topology>
    </subcellularLocation>
</comment>
<comment type="similarity">
    <text evidence="5">Belongs to the AB hydrolase superfamily.</text>
</comment>
<name>ABHD6_RAT</name>
<feature type="chain" id="PRO_0000281577" description="Monoacylglycerol lipase ABHD6">
    <location>
        <begin position="1"/>
        <end position="337"/>
    </location>
</feature>
<feature type="topological domain" description="Extracellular" evidence="4">
    <location>
        <begin position="1"/>
        <end position="8"/>
    </location>
</feature>
<feature type="transmembrane region" description="Helical; Signal-anchor for type II membrane protein" evidence="4">
    <location>
        <begin position="9"/>
        <end position="29"/>
    </location>
</feature>
<feature type="topological domain" description="Cytoplasmic" evidence="4">
    <location>
        <begin position="30"/>
        <end position="337"/>
    </location>
</feature>
<feature type="active site" description="Nucleophile" evidence="2">
    <location>
        <position position="148"/>
    </location>
</feature>
<feature type="active site" description="Charge relay system" evidence="2">
    <location>
        <position position="278"/>
    </location>
</feature>
<feature type="active site" description="Charge relay system" evidence="2">
    <location>
        <position position="306"/>
    </location>
</feature>
<evidence type="ECO:0000250" key="1">
    <source>
        <dbReference type="UniProtKB" id="Q8R2Y0"/>
    </source>
</evidence>
<evidence type="ECO:0000250" key="2">
    <source>
        <dbReference type="UniProtKB" id="Q99685"/>
    </source>
</evidence>
<evidence type="ECO:0000250" key="3">
    <source>
        <dbReference type="UniProtKB" id="Q9BV23"/>
    </source>
</evidence>
<evidence type="ECO:0000255" key="4"/>
<evidence type="ECO:0000305" key="5"/>
<evidence type="ECO:0000312" key="6">
    <source>
        <dbReference type="RGD" id="1359323"/>
    </source>
</evidence>